<sequence length="421" mass="44041">MTKDIAQVMAEVGRKAKAAAAPLSIATSEQKNKALNAAADAILEARADILEANRLDLANAEKNGMAASFVDRLTLNEARIDAIAEGIRAIATLPDPVGEVIAEWDRPNGLHIERVRTPLGVIGVIYESRPNVTADAGALCLKAGNAVILRGGSDSAHSSAAIHKALVKGLEAANLPADAIQIVPVTDRAAVGEMLKGLGGAIDVIVPRGGKSLVARVQSEARVPVFAHLEGICHLYIDKSADLDMARRIALDAKMRRTGICGAAETLLVDRAVASTHLAPILGDLAAGGCEIRGSAEVLALYPAAKPATEEDWSTEYLDAIISVALVDGISGAIDHINRYSSHHTEAIVAEDAQTVARFFNEIDSAILLHNASTQFADGGEFGMGAEIGIATGKMHARGPVGVEQLTSFKYRVRGSGQVRG</sequence>
<evidence type="ECO:0000255" key="1">
    <source>
        <dbReference type="HAMAP-Rule" id="MF_00412"/>
    </source>
</evidence>
<gene>
    <name evidence="1" type="primary">proA</name>
    <name type="ordered locus">BAB1_1851</name>
</gene>
<name>PROA_BRUA2</name>
<proteinExistence type="inferred from homology"/>
<keyword id="KW-0028">Amino-acid biosynthesis</keyword>
<keyword id="KW-0963">Cytoplasm</keyword>
<keyword id="KW-0521">NADP</keyword>
<keyword id="KW-0560">Oxidoreductase</keyword>
<keyword id="KW-0641">Proline biosynthesis</keyword>
<keyword id="KW-1185">Reference proteome</keyword>
<dbReference type="EC" id="1.2.1.41" evidence="1"/>
<dbReference type="EMBL" id="AM040264">
    <property type="protein sequence ID" value="CAJ11807.1"/>
    <property type="molecule type" value="Genomic_DNA"/>
</dbReference>
<dbReference type="SMR" id="Q2YLI7"/>
<dbReference type="STRING" id="359391.BAB1_1851"/>
<dbReference type="KEGG" id="bmf:BAB1_1851"/>
<dbReference type="HOGENOM" id="CLU_030231_0_0_5"/>
<dbReference type="UniPathway" id="UPA00098">
    <property type="reaction ID" value="UER00360"/>
</dbReference>
<dbReference type="Proteomes" id="UP000002719">
    <property type="component" value="Chromosome I"/>
</dbReference>
<dbReference type="GO" id="GO:0005737">
    <property type="term" value="C:cytoplasm"/>
    <property type="evidence" value="ECO:0007669"/>
    <property type="project" value="UniProtKB-SubCell"/>
</dbReference>
<dbReference type="GO" id="GO:0004350">
    <property type="term" value="F:glutamate-5-semialdehyde dehydrogenase activity"/>
    <property type="evidence" value="ECO:0007669"/>
    <property type="project" value="UniProtKB-UniRule"/>
</dbReference>
<dbReference type="GO" id="GO:0050661">
    <property type="term" value="F:NADP binding"/>
    <property type="evidence" value="ECO:0007669"/>
    <property type="project" value="InterPro"/>
</dbReference>
<dbReference type="GO" id="GO:0055129">
    <property type="term" value="P:L-proline biosynthetic process"/>
    <property type="evidence" value="ECO:0007669"/>
    <property type="project" value="UniProtKB-UniRule"/>
</dbReference>
<dbReference type="CDD" id="cd07079">
    <property type="entry name" value="ALDH_F18-19_ProA-GPR"/>
    <property type="match status" value="1"/>
</dbReference>
<dbReference type="Gene3D" id="3.40.605.10">
    <property type="entry name" value="Aldehyde Dehydrogenase, Chain A, domain 1"/>
    <property type="match status" value="1"/>
</dbReference>
<dbReference type="Gene3D" id="3.40.309.10">
    <property type="entry name" value="Aldehyde Dehydrogenase, Chain A, domain 2"/>
    <property type="match status" value="1"/>
</dbReference>
<dbReference type="HAMAP" id="MF_00412">
    <property type="entry name" value="ProA"/>
    <property type="match status" value="1"/>
</dbReference>
<dbReference type="InterPro" id="IPR016161">
    <property type="entry name" value="Ald_DH/histidinol_DH"/>
</dbReference>
<dbReference type="InterPro" id="IPR016163">
    <property type="entry name" value="Ald_DH_C"/>
</dbReference>
<dbReference type="InterPro" id="IPR016162">
    <property type="entry name" value="Ald_DH_N"/>
</dbReference>
<dbReference type="InterPro" id="IPR015590">
    <property type="entry name" value="Aldehyde_DH_dom"/>
</dbReference>
<dbReference type="InterPro" id="IPR020593">
    <property type="entry name" value="G-glutamylP_reductase_CS"/>
</dbReference>
<dbReference type="InterPro" id="IPR012134">
    <property type="entry name" value="Glu-5-SA_DH"/>
</dbReference>
<dbReference type="InterPro" id="IPR000965">
    <property type="entry name" value="GPR_dom"/>
</dbReference>
<dbReference type="NCBIfam" id="NF001221">
    <property type="entry name" value="PRK00197.1"/>
    <property type="match status" value="1"/>
</dbReference>
<dbReference type="NCBIfam" id="TIGR00407">
    <property type="entry name" value="proA"/>
    <property type="match status" value="1"/>
</dbReference>
<dbReference type="PANTHER" id="PTHR11063:SF8">
    <property type="entry name" value="DELTA-1-PYRROLINE-5-CARBOXYLATE SYNTHASE"/>
    <property type="match status" value="1"/>
</dbReference>
<dbReference type="PANTHER" id="PTHR11063">
    <property type="entry name" value="GLUTAMATE SEMIALDEHYDE DEHYDROGENASE"/>
    <property type="match status" value="1"/>
</dbReference>
<dbReference type="Pfam" id="PF00171">
    <property type="entry name" value="Aldedh"/>
    <property type="match status" value="1"/>
</dbReference>
<dbReference type="PIRSF" id="PIRSF000151">
    <property type="entry name" value="GPR"/>
    <property type="match status" value="1"/>
</dbReference>
<dbReference type="SUPFAM" id="SSF53720">
    <property type="entry name" value="ALDH-like"/>
    <property type="match status" value="1"/>
</dbReference>
<dbReference type="PROSITE" id="PS01223">
    <property type="entry name" value="PROA"/>
    <property type="match status" value="1"/>
</dbReference>
<comment type="function">
    <text evidence="1">Catalyzes the NADPH-dependent reduction of L-glutamate 5-phosphate into L-glutamate 5-semialdehyde and phosphate. The product spontaneously undergoes cyclization to form 1-pyrroline-5-carboxylate.</text>
</comment>
<comment type="catalytic activity">
    <reaction evidence="1">
        <text>L-glutamate 5-semialdehyde + phosphate + NADP(+) = L-glutamyl 5-phosphate + NADPH + H(+)</text>
        <dbReference type="Rhea" id="RHEA:19541"/>
        <dbReference type="ChEBI" id="CHEBI:15378"/>
        <dbReference type="ChEBI" id="CHEBI:43474"/>
        <dbReference type="ChEBI" id="CHEBI:57783"/>
        <dbReference type="ChEBI" id="CHEBI:58066"/>
        <dbReference type="ChEBI" id="CHEBI:58274"/>
        <dbReference type="ChEBI" id="CHEBI:58349"/>
        <dbReference type="EC" id="1.2.1.41"/>
    </reaction>
</comment>
<comment type="pathway">
    <text evidence="1">Amino-acid biosynthesis; L-proline biosynthesis; L-glutamate 5-semialdehyde from L-glutamate: step 2/2.</text>
</comment>
<comment type="subcellular location">
    <subcellularLocation>
        <location evidence="1">Cytoplasm</location>
    </subcellularLocation>
</comment>
<comment type="similarity">
    <text evidence="1">Belongs to the gamma-glutamyl phosphate reductase family.</text>
</comment>
<protein>
    <recommendedName>
        <fullName evidence="1">Gamma-glutamyl phosphate reductase</fullName>
        <shortName evidence="1">GPR</shortName>
        <ecNumber evidence="1">1.2.1.41</ecNumber>
    </recommendedName>
    <alternativeName>
        <fullName evidence="1">Glutamate-5-semialdehyde dehydrogenase</fullName>
    </alternativeName>
    <alternativeName>
        <fullName evidence="1">Glutamyl-gamma-semialdehyde dehydrogenase</fullName>
        <shortName evidence="1">GSA dehydrogenase</shortName>
    </alternativeName>
</protein>
<reference key="1">
    <citation type="journal article" date="2005" name="Infect. Immun.">
        <title>Whole-genome analyses of speciation events in pathogenic Brucellae.</title>
        <authorList>
            <person name="Chain P.S."/>
            <person name="Comerci D.J."/>
            <person name="Tolmasky M.E."/>
            <person name="Larimer F.W."/>
            <person name="Malfatti S.A."/>
            <person name="Vergez L.M."/>
            <person name="Aguero F."/>
            <person name="Land M.L."/>
            <person name="Ugalde R.A."/>
            <person name="Garcia E."/>
        </authorList>
    </citation>
    <scope>NUCLEOTIDE SEQUENCE [LARGE SCALE GENOMIC DNA]</scope>
    <source>
        <strain>2308</strain>
    </source>
</reference>
<feature type="chain" id="PRO_0000229993" description="Gamma-glutamyl phosphate reductase">
    <location>
        <begin position="1"/>
        <end position="421"/>
    </location>
</feature>
<organism>
    <name type="scientific">Brucella abortus (strain 2308)</name>
    <dbReference type="NCBI Taxonomy" id="359391"/>
    <lineage>
        <taxon>Bacteria</taxon>
        <taxon>Pseudomonadati</taxon>
        <taxon>Pseudomonadota</taxon>
        <taxon>Alphaproteobacteria</taxon>
        <taxon>Hyphomicrobiales</taxon>
        <taxon>Brucellaceae</taxon>
        <taxon>Brucella/Ochrobactrum group</taxon>
        <taxon>Brucella</taxon>
    </lineage>
</organism>
<accession>Q2YLI7</accession>